<reference key="1">
    <citation type="journal article" date="1997" name="Nature">
        <title>The nucleotide sequence of Saccharomyces cerevisiae chromosome IV.</title>
        <authorList>
            <person name="Jacq C."/>
            <person name="Alt-Moerbe J."/>
            <person name="Andre B."/>
            <person name="Arnold W."/>
            <person name="Bahr A."/>
            <person name="Ballesta J.P.G."/>
            <person name="Bargues M."/>
            <person name="Baron L."/>
            <person name="Becker A."/>
            <person name="Biteau N."/>
            <person name="Bloecker H."/>
            <person name="Blugeon C."/>
            <person name="Boskovic J."/>
            <person name="Brandt P."/>
            <person name="Brueckner M."/>
            <person name="Buitrago M.J."/>
            <person name="Coster F."/>
            <person name="Delaveau T."/>
            <person name="del Rey F."/>
            <person name="Dujon B."/>
            <person name="Eide L.G."/>
            <person name="Garcia-Cantalejo J.M."/>
            <person name="Goffeau A."/>
            <person name="Gomez-Peris A."/>
            <person name="Granotier C."/>
            <person name="Hanemann V."/>
            <person name="Hankeln T."/>
            <person name="Hoheisel J.D."/>
            <person name="Jaeger W."/>
            <person name="Jimenez A."/>
            <person name="Jonniaux J.-L."/>
            <person name="Kraemer C."/>
            <person name="Kuester H."/>
            <person name="Laamanen P."/>
            <person name="Legros Y."/>
            <person name="Louis E.J."/>
            <person name="Moeller-Rieker S."/>
            <person name="Monnet A."/>
            <person name="Moro M."/>
            <person name="Mueller-Auer S."/>
            <person name="Nussbaumer B."/>
            <person name="Paricio N."/>
            <person name="Paulin L."/>
            <person name="Perea J."/>
            <person name="Perez-Alonso M."/>
            <person name="Perez-Ortin J.E."/>
            <person name="Pohl T.M."/>
            <person name="Prydz H."/>
            <person name="Purnelle B."/>
            <person name="Rasmussen S.W."/>
            <person name="Remacha M.A."/>
            <person name="Revuelta J.L."/>
            <person name="Rieger M."/>
            <person name="Salom D."/>
            <person name="Saluz H.P."/>
            <person name="Saiz J.E."/>
            <person name="Saren A.-M."/>
            <person name="Schaefer M."/>
            <person name="Scharfe M."/>
            <person name="Schmidt E.R."/>
            <person name="Schneider C."/>
            <person name="Scholler P."/>
            <person name="Schwarz S."/>
            <person name="Soler-Mira A."/>
            <person name="Urrestarazu L.A."/>
            <person name="Verhasselt P."/>
            <person name="Vissers S."/>
            <person name="Voet M."/>
            <person name="Volckaert G."/>
            <person name="Wagner G."/>
            <person name="Wambutt R."/>
            <person name="Wedler E."/>
            <person name="Wedler H."/>
            <person name="Woelfl S."/>
            <person name="Harris D.E."/>
            <person name="Bowman S."/>
            <person name="Brown D."/>
            <person name="Churcher C.M."/>
            <person name="Connor R."/>
            <person name="Dedman K."/>
            <person name="Gentles S."/>
            <person name="Hamlin N."/>
            <person name="Hunt S."/>
            <person name="Jones L."/>
            <person name="McDonald S."/>
            <person name="Murphy L.D."/>
            <person name="Niblett D."/>
            <person name="Odell C."/>
            <person name="Oliver K."/>
            <person name="Rajandream M.A."/>
            <person name="Richards C."/>
            <person name="Shore L."/>
            <person name="Walsh S.V."/>
            <person name="Barrell B.G."/>
            <person name="Dietrich F.S."/>
            <person name="Mulligan J.T."/>
            <person name="Allen E."/>
            <person name="Araujo R."/>
            <person name="Aviles E."/>
            <person name="Berno A."/>
            <person name="Carpenter J."/>
            <person name="Chen E."/>
            <person name="Cherry J.M."/>
            <person name="Chung E."/>
            <person name="Duncan M."/>
            <person name="Hunicke-Smith S."/>
            <person name="Hyman R.W."/>
            <person name="Komp C."/>
            <person name="Lashkari D."/>
            <person name="Lew H."/>
            <person name="Lin D."/>
            <person name="Mosedale D."/>
            <person name="Nakahara K."/>
            <person name="Namath A."/>
            <person name="Oefner P."/>
            <person name="Oh C."/>
            <person name="Petel F.X."/>
            <person name="Roberts D."/>
            <person name="Schramm S."/>
            <person name="Schroeder M."/>
            <person name="Shogren T."/>
            <person name="Shroff N."/>
            <person name="Winant A."/>
            <person name="Yelton M.A."/>
            <person name="Botstein D."/>
            <person name="Davis R.W."/>
            <person name="Johnston M."/>
            <person name="Andrews S."/>
            <person name="Brinkman R."/>
            <person name="Cooper J."/>
            <person name="Ding H."/>
            <person name="Du Z."/>
            <person name="Favello A."/>
            <person name="Fulton L."/>
            <person name="Gattung S."/>
            <person name="Greco T."/>
            <person name="Hallsworth K."/>
            <person name="Hawkins J."/>
            <person name="Hillier L.W."/>
            <person name="Jier M."/>
            <person name="Johnson D."/>
            <person name="Johnston L."/>
            <person name="Kirsten J."/>
            <person name="Kucaba T."/>
            <person name="Langston Y."/>
            <person name="Latreille P."/>
            <person name="Le T."/>
            <person name="Mardis E."/>
            <person name="Menezes S."/>
            <person name="Miller N."/>
            <person name="Nhan M."/>
            <person name="Pauley A."/>
            <person name="Peluso D."/>
            <person name="Rifkin L."/>
            <person name="Riles L."/>
            <person name="Taich A."/>
            <person name="Trevaskis E."/>
            <person name="Vignati D."/>
            <person name="Wilcox L."/>
            <person name="Wohldman P."/>
            <person name="Vaudin M."/>
            <person name="Wilson R."/>
            <person name="Waterston R."/>
            <person name="Albermann K."/>
            <person name="Hani J."/>
            <person name="Heumann K."/>
            <person name="Kleine K."/>
            <person name="Mewes H.-W."/>
            <person name="Zollner A."/>
            <person name="Zaccaria P."/>
        </authorList>
    </citation>
    <scope>NUCLEOTIDE SEQUENCE [LARGE SCALE GENOMIC DNA]</scope>
    <source>
        <strain>ATCC 204508 / S288c</strain>
    </source>
</reference>
<reference key="2">
    <citation type="journal article" date="2014" name="G3 (Bethesda)">
        <title>The reference genome sequence of Saccharomyces cerevisiae: Then and now.</title>
        <authorList>
            <person name="Engel S.R."/>
            <person name="Dietrich F.S."/>
            <person name="Fisk D.G."/>
            <person name="Binkley G."/>
            <person name="Balakrishnan R."/>
            <person name="Costanzo M.C."/>
            <person name="Dwight S.S."/>
            <person name="Hitz B.C."/>
            <person name="Karra K."/>
            <person name="Nash R.S."/>
            <person name="Weng S."/>
            <person name="Wong E.D."/>
            <person name="Lloyd P."/>
            <person name="Skrzypek M.S."/>
            <person name="Miyasato S.R."/>
            <person name="Simison M."/>
            <person name="Cherry J.M."/>
        </authorList>
    </citation>
    <scope>GENOME REANNOTATION</scope>
    <source>
        <strain>ATCC 204508 / S288c</strain>
    </source>
</reference>
<reference key="3">
    <citation type="journal article" date="2002" name="Nature">
        <title>A large nucleolar U3 ribonucleoprotein required for 18S ribosomal RNA biogenesis.</title>
        <authorList>
            <person name="Dragon F."/>
            <person name="Gallagher J.E.G."/>
            <person name="Compagnone-Post P.A."/>
            <person name="Mitchell B.M."/>
            <person name="Porwancher K.A."/>
            <person name="Wehner K.A."/>
            <person name="Wormsley S."/>
            <person name="Settlage R.E."/>
            <person name="Shabanowitz J."/>
            <person name="Osheim Y."/>
            <person name="Beyer A.L."/>
            <person name="Hunt D.F."/>
            <person name="Baserga S.J."/>
        </authorList>
    </citation>
    <scope>FUNCTION</scope>
    <scope>INTERACTION WITH MPP10 AND SNORNA U3</scope>
    <scope>IDENTIFICATION IN SSU PROCESSOME BY MASS SPECTROMETRY</scope>
    <scope>SUBCELLULAR LOCATION</scope>
</reference>
<reference key="4">
    <citation type="journal article" date="2003" name="Nature">
        <title>Global analysis of protein expression in yeast.</title>
        <authorList>
            <person name="Ghaemmaghami S."/>
            <person name="Huh W.-K."/>
            <person name="Bower K."/>
            <person name="Howson R.W."/>
            <person name="Belle A."/>
            <person name="Dephoure N."/>
            <person name="O'Shea E.K."/>
            <person name="Weissman J.S."/>
        </authorList>
    </citation>
    <scope>LEVEL OF PROTEIN EXPRESSION [LARGE SCALE ANALYSIS]</scope>
</reference>
<reference key="5">
    <citation type="journal article" date="2004" name="Genes Dev.">
        <title>RNA polymerase I transcription and pre-rRNA processing are linked by specific SSU processome components.</title>
        <authorList>
            <person name="Gallagher J.E.G."/>
            <person name="Dunbar D.A."/>
            <person name="Granneman S."/>
            <person name="Mitchell B.M."/>
            <person name="Osheim Y."/>
            <person name="Beyer A.L."/>
            <person name="Baserga S.J."/>
        </authorList>
    </citation>
    <scope>FUNCTION</scope>
    <scope>IDENTIFICATION IN COMPLEX WITH OTHER T-UTPS</scope>
</reference>
<name>UTP4_YEAST</name>
<sequence length="776" mass="87801">MSSSLLSVLKEKSRSLKIRNKPVKMTSQERMIVHRCRFVDFTPATITSLAFSHKSNINKLTPSDLRLAIGRSNGNIEIWNPRNNWFQEMVIEGGKDRSIEGLCWSNVNGESLRLFSIGGSTVVTEWDLATGLPLRNYDCNSGVIWSISINDSQDKLSVGCDNGTVVLIDISGGPGVLEHDTILMRQEARVLTLAWKKDDFVIGGCSDGRIRIWSAQKNDENMGRLLHTMKVDKAKKESTLVWSVIYLPRTDQIASGDSTGSIKFWDFQFATLNQSFKAHDADVLCLTTDTDNNYVFSAGVDRKIFQFSQNTNKSQKNNRWVNSSNRLLHGNDIRAICAYQSKGADFLVSGGVEKTLVINSLTSFSNGNYRKMPTVEPYSKNVLVNKEQRLVVSWSESTVKIWTMGTDSSTEQNYKLVCKLTLKDDQNISTCSLSPDGQVLVVGRPSTTKVFHLQPVGNKLKVTKLDNDLLLRTSTKLVKFIDNSKIVICSCEDDVFIVDLESEEDEKPQEVELLEVTSTKSSIKVPYINRINHLEVDQNIAVISRGCGVVDILDLKARISKPLARLNNFITAVHINTSRKSVVVITADNKIYEFNMNLNSEAENEDSESVLTQWSKNNTDNLPKEWKTLKENCVGIFSDIENSSRLWFWGATWISRIDFDVDFPINKRRKQKKRTHEGLTITDESNFMNDEEDDEDDDIDMEISENLNVLLNQGNKIKSTDVQRNEESSGHFFFTDKYKPLLFVDLISSNELAIIERNPLTFHSKQKAFIQPKLVF</sequence>
<organism>
    <name type="scientific">Saccharomyces cerevisiae (strain ATCC 204508 / S288c)</name>
    <name type="common">Baker's yeast</name>
    <dbReference type="NCBI Taxonomy" id="559292"/>
    <lineage>
        <taxon>Eukaryota</taxon>
        <taxon>Fungi</taxon>
        <taxon>Dikarya</taxon>
        <taxon>Ascomycota</taxon>
        <taxon>Saccharomycotina</taxon>
        <taxon>Saccharomycetes</taxon>
        <taxon>Saccharomycetales</taxon>
        <taxon>Saccharomycetaceae</taxon>
        <taxon>Saccharomyces</taxon>
    </lineage>
</organism>
<protein>
    <recommendedName>
        <fullName>U3 small nucleolar RNA-associated protein 4</fullName>
        <shortName>U3 snoRNA-associated protein 4</shortName>
    </recommendedName>
    <alternativeName>
        <fullName>U three protein 4</fullName>
    </alternativeName>
    <alternativeName>
        <fullName>U3 protein 4 required for transcription</fullName>
    </alternativeName>
    <alternativeName>
        <fullName>t-UTP4</fullName>
    </alternativeName>
</protein>
<dbReference type="EMBL" id="U32517">
    <property type="protein sequence ID" value="AAB64760.1"/>
    <property type="molecule type" value="Genomic_DNA"/>
</dbReference>
<dbReference type="EMBL" id="BK006938">
    <property type="protein sequence ID" value="DAA12167.1"/>
    <property type="molecule type" value="Genomic_DNA"/>
</dbReference>
<dbReference type="PIR" id="S59790">
    <property type="entry name" value="S59790"/>
</dbReference>
<dbReference type="RefSeq" id="NP_010611.3">
    <property type="nucleotide sequence ID" value="NM_001180632.3"/>
</dbReference>
<dbReference type="PDB" id="5WLC">
    <property type="method" value="EM"/>
    <property type="resolution" value="3.80 A"/>
    <property type="chains" value="LN=1-776"/>
</dbReference>
<dbReference type="PDB" id="6KE6">
    <property type="method" value="EM"/>
    <property type="resolution" value="3.40 A"/>
    <property type="chains" value="A4=1-776"/>
</dbReference>
<dbReference type="PDB" id="6LQP">
    <property type="method" value="EM"/>
    <property type="resolution" value="3.20 A"/>
    <property type="chains" value="A4=1-776"/>
</dbReference>
<dbReference type="PDB" id="6LQQ">
    <property type="method" value="EM"/>
    <property type="resolution" value="4.10 A"/>
    <property type="chains" value="A4=1-776"/>
</dbReference>
<dbReference type="PDB" id="6LQR">
    <property type="method" value="EM"/>
    <property type="resolution" value="8.60 A"/>
    <property type="chains" value="A4=1-776"/>
</dbReference>
<dbReference type="PDB" id="6LQS">
    <property type="method" value="EM"/>
    <property type="resolution" value="3.80 A"/>
    <property type="chains" value="A4=1-776"/>
</dbReference>
<dbReference type="PDB" id="6LQT">
    <property type="method" value="EM"/>
    <property type="resolution" value="4.90 A"/>
    <property type="chains" value="A4=1-776"/>
</dbReference>
<dbReference type="PDB" id="6LQU">
    <property type="method" value="EM"/>
    <property type="resolution" value="3.70 A"/>
    <property type="chains" value="A4=1-776"/>
</dbReference>
<dbReference type="PDB" id="6LQV">
    <property type="method" value="EM"/>
    <property type="resolution" value="4.80 A"/>
    <property type="chains" value="A4=1-776"/>
</dbReference>
<dbReference type="PDB" id="6ND4">
    <property type="method" value="EM"/>
    <property type="resolution" value="4.30 A"/>
    <property type="chains" value="N=1-776"/>
</dbReference>
<dbReference type="PDB" id="6ZQA">
    <property type="method" value="EM"/>
    <property type="resolution" value="4.40 A"/>
    <property type="chains" value="UD=1-776"/>
</dbReference>
<dbReference type="PDB" id="6ZQB">
    <property type="method" value="EM"/>
    <property type="resolution" value="3.90 A"/>
    <property type="chains" value="UD=1-776"/>
</dbReference>
<dbReference type="PDB" id="6ZQC">
    <property type="method" value="EM"/>
    <property type="resolution" value="3.80 A"/>
    <property type="chains" value="UD=1-776"/>
</dbReference>
<dbReference type="PDB" id="6ZQD">
    <property type="method" value="EM"/>
    <property type="resolution" value="3.80 A"/>
    <property type="chains" value="UD=1-776"/>
</dbReference>
<dbReference type="PDB" id="6ZQE">
    <property type="method" value="EM"/>
    <property type="resolution" value="7.10 A"/>
    <property type="chains" value="UD=1-776"/>
</dbReference>
<dbReference type="PDB" id="7AJT">
    <property type="method" value="EM"/>
    <property type="resolution" value="4.60 A"/>
    <property type="chains" value="UD=1-776"/>
</dbReference>
<dbReference type="PDB" id="7AJU">
    <property type="method" value="EM"/>
    <property type="resolution" value="3.80 A"/>
    <property type="chains" value="UD=1-776"/>
</dbReference>
<dbReference type="PDB" id="7D4I">
    <property type="method" value="EM"/>
    <property type="resolution" value="4.00 A"/>
    <property type="chains" value="A4=1-776"/>
</dbReference>
<dbReference type="PDB" id="7D5S">
    <property type="method" value="EM"/>
    <property type="resolution" value="4.60 A"/>
    <property type="chains" value="A4=1-776"/>
</dbReference>
<dbReference type="PDB" id="7D63">
    <property type="method" value="EM"/>
    <property type="resolution" value="12.30 A"/>
    <property type="chains" value="A4=1-776"/>
</dbReference>
<dbReference type="PDB" id="7SUK">
    <property type="method" value="EM"/>
    <property type="resolution" value="3.99 A"/>
    <property type="chains" value="LN=29-776"/>
</dbReference>
<dbReference type="PDBsum" id="5WLC"/>
<dbReference type="PDBsum" id="6KE6"/>
<dbReference type="PDBsum" id="6LQP"/>
<dbReference type="PDBsum" id="6LQQ"/>
<dbReference type="PDBsum" id="6LQR"/>
<dbReference type="PDBsum" id="6LQS"/>
<dbReference type="PDBsum" id="6LQT"/>
<dbReference type="PDBsum" id="6LQU"/>
<dbReference type="PDBsum" id="6LQV"/>
<dbReference type="PDBsum" id="6ND4"/>
<dbReference type="PDBsum" id="6ZQA"/>
<dbReference type="PDBsum" id="6ZQB"/>
<dbReference type="PDBsum" id="6ZQC"/>
<dbReference type="PDBsum" id="6ZQD"/>
<dbReference type="PDBsum" id="6ZQE"/>
<dbReference type="PDBsum" id="7AJT"/>
<dbReference type="PDBsum" id="7AJU"/>
<dbReference type="PDBsum" id="7D4I"/>
<dbReference type="PDBsum" id="7D5S"/>
<dbReference type="PDBsum" id="7D63"/>
<dbReference type="PDBsum" id="7SUK"/>
<dbReference type="EMDB" id="EMD-0441"/>
<dbReference type="EMDB" id="EMD-0949"/>
<dbReference type="EMDB" id="EMD-0950"/>
<dbReference type="EMDB" id="EMD-0951"/>
<dbReference type="EMDB" id="EMD-0952"/>
<dbReference type="EMDB" id="EMD-0953"/>
<dbReference type="EMDB" id="EMD-0954"/>
<dbReference type="EMDB" id="EMD-0955"/>
<dbReference type="EMDB" id="EMD-11357"/>
<dbReference type="EMDB" id="EMD-11358"/>
<dbReference type="EMDB" id="EMD-11359"/>
<dbReference type="EMDB" id="EMD-11360"/>
<dbReference type="EMDB" id="EMD-11361"/>
<dbReference type="EMDB" id="EMD-11807"/>
<dbReference type="EMDB" id="EMD-11808"/>
<dbReference type="EMDB" id="EMD-30574"/>
<dbReference type="EMDB" id="EMD-30584"/>
<dbReference type="EMDB" id="EMD-30588"/>
<dbReference type="EMDB" id="EMD-8859"/>
<dbReference type="EMDB" id="EMD-9964"/>
<dbReference type="SMR" id="Q06679"/>
<dbReference type="BioGRID" id="32382">
    <property type="interactions" value="257"/>
</dbReference>
<dbReference type="ComplexPortal" id="CPX-1409">
    <property type="entry name" value="UTP-A complex"/>
</dbReference>
<dbReference type="DIP" id="DIP-6436N"/>
<dbReference type="FunCoup" id="Q06679">
    <property type="interactions" value="1144"/>
</dbReference>
<dbReference type="IntAct" id="Q06679">
    <property type="interactions" value="89"/>
</dbReference>
<dbReference type="MINT" id="Q06679"/>
<dbReference type="STRING" id="4932.YDR324C"/>
<dbReference type="iPTMnet" id="Q06679"/>
<dbReference type="PaxDb" id="4932-YDR324C"/>
<dbReference type="PeptideAtlas" id="Q06679"/>
<dbReference type="EnsemblFungi" id="YDR324C_mRNA">
    <property type="protein sequence ID" value="YDR324C"/>
    <property type="gene ID" value="YDR324C"/>
</dbReference>
<dbReference type="GeneID" id="851924"/>
<dbReference type="KEGG" id="sce:YDR324C"/>
<dbReference type="AGR" id="SGD:S000002732"/>
<dbReference type="SGD" id="S000002732">
    <property type="gene designation" value="UTP4"/>
</dbReference>
<dbReference type="VEuPathDB" id="FungiDB:YDR324C"/>
<dbReference type="eggNOG" id="KOG2048">
    <property type="taxonomic scope" value="Eukaryota"/>
</dbReference>
<dbReference type="HOGENOM" id="CLU_002392_2_1_1"/>
<dbReference type="InParanoid" id="Q06679"/>
<dbReference type="OMA" id="STYITEW"/>
<dbReference type="OrthoDB" id="8883818at2759"/>
<dbReference type="BioCyc" id="YEAST:G3O-29881-MONOMER"/>
<dbReference type="Reactome" id="R-SCE-6791226">
    <property type="pathway name" value="Major pathway of rRNA processing in the nucleolus and cytosol"/>
</dbReference>
<dbReference type="BioGRID-ORCS" id="851924">
    <property type="hits" value="2 hits in 10 CRISPR screens"/>
</dbReference>
<dbReference type="CD-CODE" id="BDAE0F88">
    <property type="entry name" value="Nucleolus"/>
</dbReference>
<dbReference type="PRO" id="PR:Q06679"/>
<dbReference type="Proteomes" id="UP000002311">
    <property type="component" value="Chromosome IV"/>
</dbReference>
<dbReference type="RNAct" id="Q06679">
    <property type="molecule type" value="protein"/>
</dbReference>
<dbReference type="GO" id="GO:0030686">
    <property type="term" value="C:90S preribosome"/>
    <property type="evidence" value="ECO:0000314"/>
    <property type="project" value="GO_Central"/>
</dbReference>
<dbReference type="GO" id="GO:0005730">
    <property type="term" value="C:nucleolus"/>
    <property type="evidence" value="ECO:0000314"/>
    <property type="project" value="SGD"/>
</dbReference>
<dbReference type="GO" id="GO:0005654">
    <property type="term" value="C:nucleoplasm"/>
    <property type="evidence" value="ECO:0000304"/>
    <property type="project" value="Reactome"/>
</dbReference>
<dbReference type="GO" id="GO:0032040">
    <property type="term" value="C:small-subunit processome"/>
    <property type="evidence" value="ECO:0000314"/>
    <property type="project" value="SGD"/>
</dbReference>
<dbReference type="GO" id="GO:0034455">
    <property type="term" value="C:t-UTP complex"/>
    <property type="evidence" value="ECO:0000314"/>
    <property type="project" value="SGD"/>
</dbReference>
<dbReference type="GO" id="GO:0030490">
    <property type="term" value="P:maturation of SSU-rRNA"/>
    <property type="evidence" value="ECO:0000303"/>
    <property type="project" value="ComplexPortal"/>
</dbReference>
<dbReference type="GO" id="GO:0000462">
    <property type="term" value="P:maturation of SSU-rRNA from tricistronic rRNA transcript (SSU-rRNA, 5.8S rRNA, LSU-rRNA)"/>
    <property type="evidence" value="ECO:0000315"/>
    <property type="project" value="SGD"/>
</dbReference>
<dbReference type="GO" id="GO:0045943">
    <property type="term" value="P:positive regulation of transcription by RNA polymerase I"/>
    <property type="evidence" value="ECO:0000315"/>
    <property type="project" value="SGD"/>
</dbReference>
<dbReference type="FunFam" id="2.130.10.10:FF:000896">
    <property type="entry name" value="U3 small nucleolar RNA-associated protein 4"/>
    <property type="match status" value="1"/>
</dbReference>
<dbReference type="Gene3D" id="2.130.10.10">
    <property type="entry name" value="YVTN repeat-like/Quinoprotein amine dehydrogenase"/>
    <property type="match status" value="3"/>
</dbReference>
<dbReference type="InterPro" id="IPR046351">
    <property type="entry name" value="UTP4"/>
</dbReference>
<dbReference type="InterPro" id="IPR015943">
    <property type="entry name" value="WD40/YVTN_repeat-like_dom_sf"/>
</dbReference>
<dbReference type="InterPro" id="IPR036322">
    <property type="entry name" value="WD40_repeat_dom_sf"/>
</dbReference>
<dbReference type="InterPro" id="IPR001680">
    <property type="entry name" value="WD40_rpt"/>
</dbReference>
<dbReference type="PANTHER" id="PTHR44163">
    <property type="entry name" value="U3 SMALL NUCLEOLAR RNA-ASSOCIATED PROTEIN 4 HOMOLOG"/>
    <property type="match status" value="1"/>
</dbReference>
<dbReference type="PANTHER" id="PTHR44163:SF1">
    <property type="entry name" value="U3 SMALL NUCLEOLAR RNA-ASSOCIATED PROTEIN 4 HOMOLOG"/>
    <property type="match status" value="1"/>
</dbReference>
<dbReference type="Pfam" id="PF00400">
    <property type="entry name" value="WD40"/>
    <property type="match status" value="2"/>
</dbReference>
<dbReference type="SMART" id="SM00320">
    <property type="entry name" value="WD40"/>
    <property type="match status" value="9"/>
</dbReference>
<dbReference type="SUPFAM" id="SSF50978">
    <property type="entry name" value="WD40 repeat-like"/>
    <property type="match status" value="2"/>
</dbReference>
<dbReference type="PROSITE" id="PS50082">
    <property type="entry name" value="WD_REPEATS_2"/>
    <property type="match status" value="1"/>
</dbReference>
<dbReference type="PROSITE" id="PS50294">
    <property type="entry name" value="WD_REPEATS_REGION"/>
    <property type="match status" value="1"/>
</dbReference>
<comment type="function">
    <text evidence="1 3">Involved in nucleolar processing of pre-18S ribosomal RNA. Required for optimal pre-ribosomal RNA transcription by RNA polymerase I together with a subset of U3 proteins required for transcription (t-UTPs).</text>
</comment>
<comment type="subunit">
    <text evidence="1 3">Interacts with snoRNA U3. Interacts with MPP10. Component of the ribosomal small subunit (SSU) processome composed of at least 40 protein subunits and snoRNA U3. In the absence of snoRNA3, forms a complex with other t-UTPs. This complex can associate with pre-18S ribosomal RNAs.</text>
</comment>
<comment type="interaction">
    <interactant intactId="EBI-35712">
        <id>Q06679</id>
    </interactant>
    <interactant intactId="EBI-1884">
        <id>P42945</id>
        <label>UTP10</label>
    </interactant>
    <organismsDiffer>false</organismsDiffer>
    <experiments>5</experiments>
</comment>
<comment type="interaction">
    <interactant intactId="EBI-35712">
        <id>Q06679</id>
    </interactant>
    <interactant intactId="EBI-4534">
        <id>P40362</id>
        <label>UTP18</label>
    </interactant>
    <organismsDiffer>false</organismsDiffer>
    <experiments>5</experiments>
</comment>
<comment type="interaction">
    <interactant intactId="EBI-35712">
        <id>Q06679</id>
    </interactant>
    <interactant intactId="EBI-35844">
        <id>Q04177</id>
        <label>UTP5</label>
    </interactant>
    <organismsDiffer>false</organismsDiffer>
    <experiments>7</experiments>
</comment>
<comment type="interaction">
    <interactant intactId="EBI-35712">
        <id>Q06679</id>
    </interactant>
    <interactant intactId="EBI-23301">
        <id>P53276</id>
        <label>UTP8</label>
    </interactant>
    <organismsDiffer>false</organismsDiffer>
    <experiments>7</experiments>
</comment>
<comment type="interaction">
    <interactant intactId="EBI-35712">
        <id>Q06679</id>
    </interactant>
    <interactant intactId="EBI-24892">
        <id>P38882</id>
        <label>UTP9</label>
    </interactant>
    <organismsDiffer>false</organismsDiffer>
    <experiments>7</experiments>
</comment>
<comment type="subcellular location">
    <subcellularLocation>
        <location evidence="1">Nucleus</location>
        <location evidence="1">Nucleolus</location>
    </subcellularLocation>
</comment>
<comment type="miscellaneous">
    <text evidence="2">Present with 5440 molecules/cell in log phase SD medium.</text>
</comment>
<feature type="chain" id="PRO_0000051317" description="U3 small nucleolar RNA-associated protein 4">
    <location>
        <begin position="1"/>
        <end position="776"/>
    </location>
</feature>
<feature type="repeat" description="WD 1">
    <location>
        <begin position="35"/>
        <end position="40"/>
    </location>
</feature>
<feature type="repeat" description="WD 2">
    <location>
        <begin position="132"/>
        <end position="169"/>
    </location>
</feature>
<feature type="repeat" description="WD 3">
    <location>
        <begin position="178"/>
        <end position="214"/>
    </location>
</feature>
<feature type="repeat" description="WD 4">
    <location>
        <begin position="230"/>
        <end position="266"/>
    </location>
</feature>
<feature type="repeat" description="WD 5">
    <location>
        <begin position="271"/>
        <end position="308"/>
    </location>
</feature>
<feature type="repeat" description="WD 6">
    <location>
        <begin position="417"/>
        <end position="452"/>
    </location>
</feature>
<evidence type="ECO:0000269" key="1">
    <source>
    </source>
</evidence>
<evidence type="ECO:0000269" key="2">
    <source>
    </source>
</evidence>
<evidence type="ECO:0000269" key="3">
    <source>
    </source>
</evidence>
<keyword id="KW-0002">3D-structure</keyword>
<keyword id="KW-0539">Nucleus</keyword>
<keyword id="KW-1185">Reference proteome</keyword>
<keyword id="KW-0677">Repeat</keyword>
<keyword id="KW-0687">Ribonucleoprotein</keyword>
<keyword id="KW-0690">Ribosome biogenesis</keyword>
<keyword id="KW-0698">rRNA processing</keyword>
<keyword id="KW-0804">Transcription</keyword>
<keyword id="KW-0853">WD repeat</keyword>
<proteinExistence type="evidence at protein level"/>
<accession>Q06679</accession>
<accession>D6VSV7</accession>
<gene>
    <name type="primary">UTP4</name>
    <name type="ordered locus">YDR324C</name>
</gene>